<feature type="chain" id="PRO_1000052469" description="Large ribosomal subunit protein uL4">
    <location>
        <begin position="1"/>
        <end position="200"/>
    </location>
</feature>
<feature type="region of interest" description="Disordered" evidence="2">
    <location>
        <begin position="38"/>
        <end position="67"/>
    </location>
</feature>
<accession>A6UZI9</accession>
<evidence type="ECO:0000255" key="1">
    <source>
        <dbReference type="HAMAP-Rule" id="MF_01328"/>
    </source>
</evidence>
<evidence type="ECO:0000256" key="2">
    <source>
        <dbReference type="SAM" id="MobiDB-lite"/>
    </source>
</evidence>
<evidence type="ECO:0000305" key="3"/>
<comment type="function">
    <text evidence="1">One of the primary rRNA binding proteins, this protein initially binds near the 5'-end of the 23S rRNA. It is important during the early stages of 50S assembly. It makes multiple contacts with different domains of the 23S rRNA in the assembled 50S subunit and ribosome.</text>
</comment>
<comment type="function">
    <text evidence="1">Forms part of the polypeptide exit tunnel.</text>
</comment>
<comment type="subunit">
    <text evidence="1">Part of the 50S ribosomal subunit.</text>
</comment>
<comment type="similarity">
    <text evidence="1">Belongs to the universal ribosomal protein uL4 family.</text>
</comment>
<reference key="1">
    <citation type="submission" date="2007-06" db="EMBL/GenBank/DDBJ databases">
        <authorList>
            <person name="Dodson R.J."/>
            <person name="Harkins D."/>
            <person name="Paulsen I.T."/>
        </authorList>
    </citation>
    <scope>NUCLEOTIDE SEQUENCE [LARGE SCALE GENOMIC DNA]</scope>
    <source>
        <strain>DSM 24068 / PA7</strain>
    </source>
</reference>
<proteinExistence type="inferred from homology"/>
<sequence>MQLNVNGAQAIEVSERTFGGEFNETLVHQAVVAYMAGGRQGSKAQKTRSEVSGGGKKPWRQKGTGRARAGTIRSPIWRGGGTTFAAKPRSHEQKLNKKMYRAALRSILAELVRLDRLVVVADFAVDAPKTKGLVAKLDTLGLKDVLIVTDGVDENLYLAARNLAHVDVRDVQGSDPVSLIAYDKVLVTVSAVKKFEELLG</sequence>
<protein>
    <recommendedName>
        <fullName evidence="1">Large ribosomal subunit protein uL4</fullName>
    </recommendedName>
    <alternativeName>
        <fullName evidence="3">50S ribosomal protein L4</fullName>
    </alternativeName>
</protein>
<keyword id="KW-0687">Ribonucleoprotein</keyword>
<keyword id="KW-0689">Ribosomal protein</keyword>
<keyword id="KW-0694">RNA-binding</keyword>
<keyword id="KW-0699">rRNA-binding</keyword>
<gene>
    <name evidence="1" type="primary">rplD</name>
    <name type="ordered locus">PSPA7_0838</name>
</gene>
<dbReference type="EMBL" id="CP000744">
    <property type="protein sequence ID" value="ABR84637.1"/>
    <property type="molecule type" value="Genomic_DNA"/>
</dbReference>
<dbReference type="RefSeq" id="WP_003093737.1">
    <property type="nucleotide sequence ID" value="NC_009656.1"/>
</dbReference>
<dbReference type="SMR" id="A6UZI9"/>
<dbReference type="GeneID" id="77219199"/>
<dbReference type="KEGG" id="pap:PSPA7_0838"/>
<dbReference type="HOGENOM" id="CLU_041575_5_2_6"/>
<dbReference type="Proteomes" id="UP000001582">
    <property type="component" value="Chromosome"/>
</dbReference>
<dbReference type="GO" id="GO:1990904">
    <property type="term" value="C:ribonucleoprotein complex"/>
    <property type="evidence" value="ECO:0007669"/>
    <property type="project" value="UniProtKB-KW"/>
</dbReference>
<dbReference type="GO" id="GO:0005840">
    <property type="term" value="C:ribosome"/>
    <property type="evidence" value="ECO:0007669"/>
    <property type="project" value="UniProtKB-KW"/>
</dbReference>
<dbReference type="GO" id="GO:0019843">
    <property type="term" value="F:rRNA binding"/>
    <property type="evidence" value="ECO:0007669"/>
    <property type="project" value="UniProtKB-UniRule"/>
</dbReference>
<dbReference type="GO" id="GO:0003735">
    <property type="term" value="F:structural constituent of ribosome"/>
    <property type="evidence" value="ECO:0007669"/>
    <property type="project" value="InterPro"/>
</dbReference>
<dbReference type="GO" id="GO:0006412">
    <property type="term" value="P:translation"/>
    <property type="evidence" value="ECO:0007669"/>
    <property type="project" value="UniProtKB-UniRule"/>
</dbReference>
<dbReference type="FunFam" id="3.40.1370.10:FF:000001">
    <property type="entry name" value="50S ribosomal protein L4"/>
    <property type="match status" value="1"/>
</dbReference>
<dbReference type="Gene3D" id="3.40.1370.10">
    <property type="match status" value="1"/>
</dbReference>
<dbReference type="HAMAP" id="MF_01328_B">
    <property type="entry name" value="Ribosomal_uL4_B"/>
    <property type="match status" value="1"/>
</dbReference>
<dbReference type="InterPro" id="IPR002136">
    <property type="entry name" value="Ribosomal_uL4"/>
</dbReference>
<dbReference type="InterPro" id="IPR013005">
    <property type="entry name" value="Ribosomal_uL4-like"/>
</dbReference>
<dbReference type="InterPro" id="IPR023574">
    <property type="entry name" value="Ribosomal_uL4_dom_sf"/>
</dbReference>
<dbReference type="NCBIfam" id="TIGR03953">
    <property type="entry name" value="rplD_bact"/>
    <property type="match status" value="1"/>
</dbReference>
<dbReference type="PANTHER" id="PTHR10746">
    <property type="entry name" value="50S RIBOSOMAL PROTEIN L4"/>
    <property type="match status" value="1"/>
</dbReference>
<dbReference type="PANTHER" id="PTHR10746:SF6">
    <property type="entry name" value="LARGE RIBOSOMAL SUBUNIT PROTEIN UL4M"/>
    <property type="match status" value="1"/>
</dbReference>
<dbReference type="Pfam" id="PF00573">
    <property type="entry name" value="Ribosomal_L4"/>
    <property type="match status" value="1"/>
</dbReference>
<dbReference type="SUPFAM" id="SSF52166">
    <property type="entry name" value="Ribosomal protein L4"/>
    <property type="match status" value="1"/>
</dbReference>
<name>RL4_PSEP7</name>
<organism>
    <name type="scientific">Pseudomonas paraeruginosa (strain DSM 24068 / PA7)</name>
    <name type="common">Pseudomonas aeruginosa (strain PA7)</name>
    <dbReference type="NCBI Taxonomy" id="381754"/>
    <lineage>
        <taxon>Bacteria</taxon>
        <taxon>Pseudomonadati</taxon>
        <taxon>Pseudomonadota</taxon>
        <taxon>Gammaproteobacteria</taxon>
        <taxon>Pseudomonadales</taxon>
        <taxon>Pseudomonadaceae</taxon>
        <taxon>Pseudomonas</taxon>
        <taxon>Pseudomonas paraeruginosa</taxon>
    </lineage>
</organism>